<keyword id="KW-0068">Autocatalytic cleavage</keyword>
<keyword id="KW-0227">DNA damage</keyword>
<keyword id="KW-0234">DNA repair</keyword>
<keyword id="KW-0235">DNA replication</keyword>
<keyword id="KW-0238">DNA-binding</keyword>
<keyword id="KW-0378">Hydrolase</keyword>
<keyword id="KW-1185">Reference proteome</keyword>
<keyword id="KW-0678">Repressor</keyword>
<keyword id="KW-0742">SOS response</keyword>
<keyword id="KW-0804">Transcription</keyword>
<keyword id="KW-0805">Transcription regulation</keyword>
<proteinExistence type="inferred from homology"/>
<reference key="1">
    <citation type="submission" date="2007-07" db="EMBL/GenBank/DDBJ databases">
        <title>Complete sequence of chromosome of Xanthobacter autotrophicus Py2.</title>
        <authorList>
            <consortium name="US DOE Joint Genome Institute"/>
            <person name="Copeland A."/>
            <person name="Lucas S."/>
            <person name="Lapidus A."/>
            <person name="Barry K."/>
            <person name="Glavina del Rio T."/>
            <person name="Hammon N."/>
            <person name="Israni S."/>
            <person name="Dalin E."/>
            <person name="Tice H."/>
            <person name="Pitluck S."/>
            <person name="Sims D."/>
            <person name="Brettin T."/>
            <person name="Bruce D."/>
            <person name="Detter J.C."/>
            <person name="Han C."/>
            <person name="Tapia R."/>
            <person name="Brainard J."/>
            <person name="Schmutz J."/>
            <person name="Larimer F."/>
            <person name="Land M."/>
            <person name="Hauser L."/>
            <person name="Kyrpides N."/>
            <person name="Kim E."/>
            <person name="Ensigns S.A."/>
            <person name="Richardson P."/>
        </authorList>
    </citation>
    <scope>NUCLEOTIDE SEQUENCE [LARGE SCALE GENOMIC DNA]</scope>
    <source>
        <strain>ATCC BAA-1158 / Py2</strain>
    </source>
</reference>
<evidence type="ECO:0000255" key="1">
    <source>
        <dbReference type="HAMAP-Rule" id="MF_00015"/>
    </source>
</evidence>
<organism>
    <name type="scientific">Xanthobacter autotrophicus (strain ATCC BAA-1158 / Py2)</name>
    <dbReference type="NCBI Taxonomy" id="78245"/>
    <lineage>
        <taxon>Bacteria</taxon>
        <taxon>Pseudomonadati</taxon>
        <taxon>Pseudomonadota</taxon>
        <taxon>Alphaproteobacteria</taxon>
        <taxon>Hyphomicrobiales</taxon>
        <taxon>Xanthobacteraceae</taxon>
        <taxon>Xanthobacter</taxon>
    </lineage>
</organism>
<feature type="chain" id="PRO_1000089603" description="LexA repressor">
    <location>
        <begin position="1"/>
        <end position="237"/>
    </location>
</feature>
<feature type="DNA-binding region" description="H-T-H motif" evidence="1">
    <location>
        <begin position="26"/>
        <end position="46"/>
    </location>
</feature>
<feature type="active site" description="For autocatalytic cleavage activity" evidence="1">
    <location>
        <position position="158"/>
    </location>
</feature>
<feature type="active site" description="For autocatalytic cleavage activity" evidence="1">
    <location>
        <position position="196"/>
    </location>
</feature>
<feature type="site" description="Cleavage; by autolysis" evidence="1">
    <location>
        <begin position="123"/>
        <end position="124"/>
    </location>
</feature>
<gene>
    <name evidence="1" type="primary">lexA</name>
    <name type="ordered locus">Xaut_4371</name>
</gene>
<comment type="function">
    <text evidence="1">Represses a number of genes involved in the response to DNA damage (SOS response), including recA and lexA. In the presence of single-stranded DNA, RecA interacts with LexA causing an autocatalytic cleavage which disrupts the DNA-binding part of LexA, leading to derepression of the SOS regulon and eventually DNA repair.</text>
</comment>
<comment type="catalytic activity">
    <reaction evidence="1">
        <text>Hydrolysis of Ala-|-Gly bond in repressor LexA.</text>
        <dbReference type="EC" id="3.4.21.88"/>
    </reaction>
</comment>
<comment type="subunit">
    <text evidence="1">Homodimer.</text>
</comment>
<comment type="similarity">
    <text evidence="1">Belongs to the peptidase S24 family.</text>
</comment>
<protein>
    <recommendedName>
        <fullName evidence="1">LexA repressor</fullName>
        <ecNumber evidence="1">3.4.21.88</ecNumber>
    </recommendedName>
</protein>
<dbReference type="EC" id="3.4.21.88" evidence="1"/>
<dbReference type="EMBL" id="CP000781">
    <property type="protein sequence ID" value="ABS69592.1"/>
    <property type="molecule type" value="Genomic_DNA"/>
</dbReference>
<dbReference type="SMR" id="A7INJ8"/>
<dbReference type="STRING" id="78245.Xaut_4371"/>
<dbReference type="MEROPS" id="S24.001"/>
<dbReference type="KEGG" id="xau:Xaut_4371"/>
<dbReference type="eggNOG" id="COG1974">
    <property type="taxonomic scope" value="Bacteria"/>
</dbReference>
<dbReference type="HOGENOM" id="CLU_066192_45_2_5"/>
<dbReference type="OrthoDB" id="9802364at2"/>
<dbReference type="PhylomeDB" id="A7INJ8"/>
<dbReference type="Proteomes" id="UP000002417">
    <property type="component" value="Chromosome"/>
</dbReference>
<dbReference type="GO" id="GO:0003677">
    <property type="term" value="F:DNA binding"/>
    <property type="evidence" value="ECO:0007669"/>
    <property type="project" value="UniProtKB-UniRule"/>
</dbReference>
<dbReference type="GO" id="GO:0004252">
    <property type="term" value="F:serine-type endopeptidase activity"/>
    <property type="evidence" value="ECO:0007669"/>
    <property type="project" value="UniProtKB-UniRule"/>
</dbReference>
<dbReference type="GO" id="GO:0006281">
    <property type="term" value="P:DNA repair"/>
    <property type="evidence" value="ECO:0007669"/>
    <property type="project" value="UniProtKB-UniRule"/>
</dbReference>
<dbReference type="GO" id="GO:0006260">
    <property type="term" value="P:DNA replication"/>
    <property type="evidence" value="ECO:0007669"/>
    <property type="project" value="UniProtKB-UniRule"/>
</dbReference>
<dbReference type="GO" id="GO:0045892">
    <property type="term" value="P:negative regulation of DNA-templated transcription"/>
    <property type="evidence" value="ECO:0007669"/>
    <property type="project" value="UniProtKB-UniRule"/>
</dbReference>
<dbReference type="GO" id="GO:0006508">
    <property type="term" value="P:proteolysis"/>
    <property type="evidence" value="ECO:0007669"/>
    <property type="project" value="InterPro"/>
</dbReference>
<dbReference type="GO" id="GO:0009432">
    <property type="term" value="P:SOS response"/>
    <property type="evidence" value="ECO:0007669"/>
    <property type="project" value="UniProtKB-UniRule"/>
</dbReference>
<dbReference type="CDD" id="cd06529">
    <property type="entry name" value="S24_LexA-like"/>
    <property type="match status" value="1"/>
</dbReference>
<dbReference type="FunFam" id="1.10.10.10:FF:000102">
    <property type="entry name" value="LexA repressor"/>
    <property type="match status" value="1"/>
</dbReference>
<dbReference type="FunFam" id="2.10.109.10:FF:000001">
    <property type="entry name" value="LexA repressor"/>
    <property type="match status" value="1"/>
</dbReference>
<dbReference type="Gene3D" id="2.10.109.10">
    <property type="entry name" value="Umud Fragment, subunit A"/>
    <property type="match status" value="1"/>
</dbReference>
<dbReference type="Gene3D" id="1.10.10.10">
    <property type="entry name" value="Winged helix-like DNA-binding domain superfamily/Winged helix DNA-binding domain"/>
    <property type="match status" value="1"/>
</dbReference>
<dbReference type="HAMAP" id="MF_00015">
    <property type="entry name" value="LexA"/>
    <property type="match status" value="1"/>
</dbReference>
<dbReference type="InterPro" id="IPR006200">
    <property type="entry name" value="LexA"/>
</dbReference>
<dbReference type="InterPro" id="IPR039418">
    <property type="entry name" value="LexA-like"/>
</dbReference>
<dbReference type="InterPro" id="IPR036286">
    <property type="entry name" value="LexA/Signal_pep-like_sf"/>
</dbReference>
<dbReference type="InterPro" id="IPR006199">
    <property type="entry name" value="LexA_DNA-bd_dom"/>
</dbReference>
<dbReference type="InterPro" id="IPR050077">
    <property type="entry name" value="LexA_repressor"/>
</dbReference>
<dbReference type="InterPro" id="IPR006197">
    <property type="entry name" value="Peptidase_S24_LexA"/>
</dbReference>
<dbReference type="InterPro" id="IPR015927">
    <property type="entry name" value="Peptidase_S24_S26A/B/C"/>
</dbReference>
<dbReference type="InterPro" id="IPR036388">
    <property type="entry name" value="WH-like_DNA-bd_sf"/>
</dbReference>
<dbReference type="InterPro" id="IPR036390">
    <property type="entry name" value="WH_DNA-bd_sf"/>
</dbReference>
<dbReference type="NCBIfam" id="TIGR00498">
    <property type="entry name" value="lexA"/>
    <property type="match status" value="1"/>
</dbReference>
<dbReference type="PANTHER" id="PTHR33516">
    <property type="entry name" value="LEXA REPRESSOR"/>
    <property type="match status" value="1"/>
</dbReference>
<dbReference type="PANTHER" id="PTHR33516:SF2">
    <property type="entry name" value="LEXA REPRESSOR-RELATED"/>
    <property type="match status" value="1"/>
</dbReference>
<dbReference type="Pfam" id="PF01726">
    <property type="entry name" value="LexA_DNA_bind"/>
    <property type="match status" value="1"/>
</dbReference>
<dbReference type="Pfam" id="PF00717">
    <property type="entry name" value="Peptidase_S24"/>
    <property type="match status" value="1"/>
</dbReference>
<dbReference type="PRINTS" id="PR00726">
    <property type="entry name" value="LEXASERPTASE"/>
</dbReference>
<dbReference type="SUPFAM" id="SSF51306">
    <property type="entry name" value="LexA/Signal peptidase"/>
    <property type="match status" value="1"/>
</dbReference>
<dbReference type="SUPFAM" id="SSF46785">
    <property type="entry name" value="Winged helix' DNA-binding domain"/>
    <property type="match status" value="1"/>
</dbReference>
<accession>A7INJ8</accession>
<sequence>MLTRKQYDLLRFIHERLKETGVPPSFDEMKEALDLRSKSGIHRLITALEERGFIRRLPNRARALEVVRLPDSVAPGLATPRSASRGFSPSVIEGSLGKVRPAADDDEGAGQVVTVPVMGRIAAGSPISAIQTRSHTLNIPPEMLGSGEHFALEVRGDSMIEAGILDGDTVLIRKCDTADTGDIIVALVDDEEATLKRLRKKGASIALEAANPAYETRIFGPDRVRIQGRLIGLMRRY</sequence>
<name>LEXA_XANP2</name>